<reference key="1">
    <citation type="journal article" date="2005" name="Nucleic Acids Res.">
        <title>The genome sequence of Salmonella enterica serovar Choleraesuis, a highly invasive and resistant zoonotic pathogen.</title>
        <authorList>
            <person name="Chiu C.-H."/>
            <person name="Tang P."/>
            <person name="Chu C."/>
            <person name="Hu S."/>
            <person name="Bao Q."/>
            <person name="Yu J."/>
            <person name="Chou Y.-Y."/>
            <person name="Wang H.-S."/>
            <person name="Lee Y.-S."/>
        </authorList>
    </citation>
    <scope>NUCLEOTIDE SEQUENCE [LARGE SCALE GENOMIC DNA]</scope>
    <source>
        <strain>SC-B67</strain>
    </source>
</reference>
<protein>
    <recommendedName>
        <fullName evidence="1">UDP-3-O-acyl-N-acetylglucosamine deacetylase</fullName>
        <shortName evidence="1">UDP-3-O-acyl-GlcNAc deacetylase</shortName>
        <ecNumber evidence="1">3.5.1.108</ecNumber>
    </recommendedName>
    <alternativeName>
        <fullName evidence="1">UDP-3-O-[R-3-hydroxymyristoyl]-N-acetylglucosamine deacetylase</fullName>
    </alternativeName>
</protein>
<feature type="chain" id="PRO_0000253693" description="UDP-3-O-acyl-N-acetylglucosamine deacetylase">
    <location>
        <begin position="1"/>
        <end position="305"/>
    </location>
</feature>
<feature type="active site" description="Proton donor" evidence="1">
    <location>
        <position position="265"/>
    </location>
</feature>
<feature type="binding site" evidence="1">
    <location>
        <position position="79"/>
    </location>
    <ligand>
        <name>Zn(2+)</name>
        <dbReference type="ChEBI" id="CHEBI:29105"/>
    </ligand>
</feature>
<feature type="binding site" evidence="1">
    <location>
        <position position="238"/>
    </location>
    <ligand>
        <name>Zn(2+)</name>
        <dbReference type="ChEBI" id="CHEBI:29105"/>
    </ligand>
</feature>
<feature type="binding site" evidence="1">
    <location>
        <position position="242"/>
    </location>
    <ligand>
        <name>Zn(2+)</name>
        <dbReference type="ChEBI" id="CHEBI:29105"/>
    </ligand>
</feature>
<name>LPXC_SALCH</name>
<keyword id="KW-0378">Hydrolase</keyword>
<keyword id="KW-0441">Lipid A biosynthesis</keyword>
<keyword id="KW-0444">Lipid biosynthesis</keyword>
<keyword id="KW-0443">Lipid metabolism</keyword>
<keyword id="KW-0479">Metal-binding</keyword>
<keyword id="KW-0862">Zinc</keyword>
<gene>
    <name evidence="1" type="primary">lpxC</name>
    <name type="ordered locus">SCH_0131</name>
</gene>
<proteinExistence type="inferred from homology"/>
<evidence type="ECO:0000255" key="1">
    <source>
        <dbReference type="HAMAP-Rule" id="MF_00388"/>
    </source>
</evidence>
<accession>Q57TC4</accession>
<organism>
    <name type="scientific">Salmonella choleraesuis (strain SC-B67)</name>
    <dbReference type="NCBI Taxonomy" id="321314"/>
    <lineage>
        <taxon>Bacteria</taxon>
        <taxon>Pseudomonadati</taxon>
        <taxon>Pseudomonadota</taxon>
        <taxon>Gammaproteobacteria</taxon>
        <taxon>Enterobacterales</taxon>
        <taxon>Enterobacteriaceae</taxon>
        <taxon>Salmonella</taxon>
    </lineage>
</organism>
<comment type="function">
    <text evidence="1">Catalyzes the hydrolysis of UDP-3-O-myristoyl-N-acetylglucosamine to form UDP-3-O-myristoylglucosamine and acetate, the committed step in lipid A biosynthesis.</text>
</comment>
<comment type="catalytic activity">
    <reaction evidence="1">
        <text>a UDP-3-O-[(3R)-3-hydroxyacyl]-N-acetyl-alpha-D-glucosamine + H2O = a UDP-3-O-[(3R)-3-hydroxyacyl]-alpha-D-glucosamine + acetate</text>
        <dbReference type="Rhea" id="RHEA:67816"/>
        <dbReference type="ChEBI" id="CHEBI:15377"/>
        <dbReference type="ChEBI" id="CHEBI:30089"/>
        <dbReference type="ChEBI" id="CHEBI:137740"/>
        <dbReference type="ChEBI" id="CHEBI:173225"/>
        <dbReference type="EC" id="3.5.1.108"/>
    </reaction>
</comment>
<comment type="cofactor">
    <cofactor evidence="1">
        <name>Zn(2+)</name>
        <dbReference type="ChEBI" id="CHEBI:29105"/>
    </cofactor>
</comment>
<comment type="pathway">
    <text evidence="1">Glycolipid biosynthesis; lipid IV(A) biosynthesis; lipid IV(A) from (3R)-3-hydroxytetradecanoyl-[acyl-carrier-protein] and UDP-N-acetyl-alpha-D-glucosamine: step 2/6.</text>
</comment>
<comment type="similarity">
    <text evidence="1">Belongs to the LpxC family.</text>
</comment>
<dbReference type="EC" id="3.5.1.108" evidence="1"/>
<dbReference type="EMBL" id="AE017220">
    <property type="protein sequence ID" value="AAX64037.1"/>
    <property type="molecule type" value="Genomic_DNA"/>
</dbReference>
<dbReference type="RefSeq" id="WP_000595487.1">
    <property type="nucleotide sequence ID" value="NC_006905.1"/>
</dbReference>
<dbReference type="SMR" id="Q57TC4"/>
<dbReference type="KEGG" id="sec:SCH_0131"/>
<dbReference type="HOGENOM" id="CLU_046528_1_0_6"/>
<dbReference type="UniPathway" id="UPA00359">
    <property type="reaction ID" value="UER00478"/>
</dbReference>
<dbReference type="Proteomes" id="UP000000538">
    <property type="component" value="Chromosome"/>
</dbReference>
<dbReference type="GO" id="GO:0016020">
    <property type="term" value="C:membrane"/>
    <property type="evidence" value="ECO:0007669"/>
    <property type="project" value="GOC"/>
</dbReference>
<dbReference type="GO" id="GO:0046872">
    <property type="term" value="F:metal ion binding"/>
    <property type="evidence" value="ECO:0007669"/>
    <property type="project" value="UniProtKB-KW"/>
</dbReference>
<dbReference type="GO" id="GO:0103117">
    <property type="term" value="F:UDP-3-O-acyl-N-acetylglucosamine deacetylase activity"/>
    <property type="evidence" value="ECO:0007669"/>
    <property type="project" value="UniProtKB-UniRule"/>
</dbReference>
<dbReference type="GO" id="GO:0009245">
    <property type="term" value="P:lipid A biosynthetic process"/>
    <property type="evidence" value="ECO:0007669"/>
    <property type="project" value="UniProtKB-UniRule"/>
</dbReference>
<dbReference type="FunFam" id="3.30.1700.10:FF:000001">
    <property type="entry name" value="UDP-3-O-acyl-N-acetylglucosamine deacetylase"/>
    <property type="match status" value="1"/>
</dbReference>
<dbReference type="FunFam" id="3.30.230.20:FF:000001">
    <property type="entry name" value="UDP-3-O-acyl-N-acetylglucosamine deacetylase"/>
    <property type="match status" value="1"/>
</dbReference>
<dbReference type="Gene3D" id="3.30.230.20">
    <property type="entry name" value="lpxc deacetylase, domain 1"/>
    <property type="match status" value="1"/>
</dbReference>
<dbReference type="Gene3D" id="3.30.1700.10">
    <property type="entry name" value="lpxc deacetylase, domain 2"/>
    <property type="match status" value="1"/>
</dbReference>
<dbReference type="HAMAP" id="MF_00388">
    <property type="entry name" value="LpxC"/>
    <property type="match status" value="1"/>
</dbReference>
<dbReference type="InterPro" id="IPR020568">
    <property type="entry name" value="Ribosomal_Su5_D2-typ_SF"/>
</dbReference>
<dbReference type="InterPro" id="IPR004463">
    <property type="entry name" value="UDP-acyl_GlcNac_deAcase"/>
</dbReference>
<dbReference type="InterPro" id="IPR011334">
    <property type="entry name" value="UDP-acyl_GlcNac_deAcase_C"/>
</dbReference>
<dbReference type="InterPro" id="IPR015870">
    <property type="entry name" value="UDP-acyl_N-AcGlcN_deAcase_N"/>
</dbReference>
<dbReference type="NCBIfam" id="TIGR00325">
    <property type="entry name" value="lpxC"/>
    <property type="match status" value="1"/>
</dbReference>
<dbReference type="PANTHER" id="PTHR33694">
    <property type="entry name" value="UDP-3-O-ACYL-N-ACETYLGLUCOSAMINE DEACETYLASE 1, MITOCHONDRIAL-RELATED"/>
    <property type="match status" value="1"/>
</dbReference>
<dbReference type="PANTHER" id="PTHR33694:SF1">
    <property type="entry name" value="UDP-3-O-ACYL-N-ACETYLGLUCOSAMINE DEACETYLASE 1, MITOCHONDRIAL-RELATED"/>
    <property type="match status" value="1"/>
</dbReference>
<dbReference type="Pfam" id="PF03331">
    <property type="entry name" value="LpxC"/>
    <property type="match status" value="1"/>
</dbReference>
<dbReference type="SUPFAM" id="SSF54211">
    <property type="entry name" value="Ribosomal protein S5 domain 2-like"/>
    <property type="match status" value="2"/>
</dbReference>
<sequence>MIKQRTLKRIVQATGVGLHTGKKVTLTLRPAPANTGVIYRRTDLNPPVDFPADAKSVRDTMLCTCLVNEHDVRISTVEHLNAALAGLGIDNIVIEVNAPEIPIMDGSAAPFVYLLLDAGIDELNCAKKFVRIKETVRVEDGDKWAEFRPYNGFTLDFTIDFNHPAIDSSSQRYAMNFSADAFMRQISRARTFGFMRDIEYLQSRGLCLGGSFDCAIVVDDYRVLNEDGLRFEDEFVRHKMLDAIGDLFMCGHNIIGAFTAYKSGHALNNKLLQAVLAKQEAWEFVTFQDDAELPLAFKAPSTVLA</sequence>